<proteinExistence type="inferred from homology"/>
<name>RL36_VESOH</name>
<organism>
    <name type="scientific">Vesicomyosocius okutanii subsp. Calyptogena okutanii (strain HA)</name>
    <dbReference type="NCBI Taxonomy" id="412965"/>
    <lineage>
        <taxon>Bacteria</taxon>
        <taxon>Pseudomonadati</taxon>
        <taxon>Pseudomonadota</taxon>
        <taxon>Gammaproteobacteria</taxon>
        <taxon>Candidatus Pseudothioglobaceae</taxon>
        <taxon>Candidatus Vesicomyosocius</taxon>
    </lineage>
</organism>
<evidence type="ECO:0000255" key="1">
    <source>
        <dbReference type="HAMAP-Rule" id="MF_00251"/>
    </source>
</evidence>
<evidence type="ECO:0000305" key="2"/>
<protein>
    <recommendedName>
        <fullName evidence="1">Large ribosomal subunit protein bL36</fullName>
    </recommendedName>
    <alternativeName>
        <fullName evidence="2">50S ribosomal protein L36</fullName>
    </alternativeName>
</protein>
<comment type="similarity">
    <text evidence="1">Belongs to the bacterial ribosomal protein bL36 family.</text>
</comment>
<reference key="1">
    <citation type="journal article" date="2007" name="Curr. Biol.">
        <title>Reduced genome of the thioautotrophic intracellular symbiont in a deep-sea clam, Calyptogena okutanii.</title>
        <authorList>
            <person name="Kuwahara H."/>
            <person name="Yoshida T."/>
            <person name="Takaki Y."/>
            <person name="Shimamura S."/>
            <person name="Nishi S."/>
            <person name="Harada M."/>
            <person name="Matsuyama K."/>
            <person name="Takishita K."/>
            <person name="Kawato M."/>
            <person name="Uematsu K."/>
            <person name="Fujiwara Y."/>
            <person name="Sato T."/>
            <person name="Kato C."/>
            <person name="Kitagawa M."/>
            <person name="Kato I."/>
            <person name="Maruyama T."/>
        </authorList>
    </citation>
    <scope>NUCLEOTIDE SEQUENCE [LARGE SCALE GENOMIC DNA]</scope>
    <source>
        <strain>HA</strain>
    </source>
</reference>
<keyword id="KW-1185">Reference proteome</keyword>
<keyword id="KW-0687">Ribonucleoprotein</keyword>
<keyword id="KW-0689">Ribosomal protein</keyword>
<gene>
    <name evidence="1" type="primary">rpmJ</name>
    <name type="ordered locus">COSY_0190</name>
</gene>
<feature type="chain" id="PRO_0000302329" description="Large ribosomal subunit protein bL36">
    <location>
        <begin position="1"/>
        <end position="37"/>
    </location>
</feature>
<dbReference type="EMBL" id="AP009247">
    <property type="protein sequence ID" value="BAF61320.1"/>
    <property type="molecule type" value="Genomic_DNA"/>
</dbReference>
<dbReference type="RefSeq" id="WP_011929590.1">
    <property type="nucleotide sequence ID" value="NC_009465.1"/>
</dbReference>
<dbReference type="SMR" id="A5CXI5"/>
<dbReference type="STRING" id="412965.COSY_0190"/>
<dbReference type="KEGG" id="vok:COSY_0190"/>
<dbReference type="eggNOG" id="COG0257">
    <property type="taxonomic scope" value="Bacteria"/>
</dbReference>
<dbReference type="HOGENOM" id="CLU_135723_6_2_6"/>
<dbReference type="OrthoDB" id="9802520at2"/>
<dbReference type="Proteomes" id="UP000000247">
    <property type="component" value="Chromosome"/>
</dbReference>
<dbReference type="GO" id="GO:0005737">
    <property type="term" value="C:cytoplasm"/>
    <property type="evidence" value="ECO:0007669"/>
    <property type="project" value="UniProtKB-ARBA"/>
</dbReference>
<dbReference type="GO" id="GO:1990904">
    <property type="term" value="C:ribonucleoprotein complex"/>
    <property type="evidence" value="ECO:0007669"/>
    <property type="project" value="UniProtKB-KW"/>
</dbReference>
<dbReference type="GO" id="GO:0005840">
    <property type="term" value="C:ribosome"/>
    <property type="evidence" value="ECO:0007669"/>
    <property type="project" value="UniProtKB-KW"/>
</dbReference>
<dbReference type="GO" id="GO:0003735">
    <property type="term" value="F:structural constituent of ribosome"/>
    <property type="evidence" value="ECO:0007669"/>
    <property type="project" value="InterPro"/>
</dbReference>
<dbReference type="GO" id="GO:0006412">
    <property type="term" value="P:translation"/>
    <property type="evidence" value="ECO:0007669"/>
    <property type="project" value="UniProtKB-UniRule"/>
</dbReference>
<dbReference type="HAMAP" id="MF_00251">
    <property type="entry name" value="Ribosomal_bL36"/>
    <property type="match status" value="1"/>
</dbReference>
<dbReference type="InterPro" id="IPR000473">
    <property type="entry name" value="Ribosomal_bL36"/>
</dbReference>
<dbReference type="InterPro" id="IPR035977">
    <property type="entry name" value="Ribosomal_bL36_sp"/>
</dbReference>
<dbReference type="NCBIfam" id="TIGR01022">
    <property type="entry name" value="rpmJ_bact"/>
    <property type="match status" value="1"/>
</dbReference>
<dbReference type="PANTHER" id="PTHR42888">
    <property type="entry name" value="50S RIBOSOMAL PROTEIN L36, CHLOROPLASTIC"/>
    <property type="match status" value="1"/>
</dbReference>
<dbReference type="PANTHER" id="PTHR42888:SF1">
    <property type="entry name" value="LARGE RIBOSOMAL SUBUNIT PROTEIN BL36C"/>
    <property type="match status" value="1"/>
</dbReference>
<dbReference type="Pfam" id="PF00444">
    <property type="entry name" value="Ribosomal_L36"/>
    <property type="match status" value="1"/>
</dbReference>
<dbReference type="SUPFAM" id="SSF57840">
    <property type="entry name" value="Ribosomal protein L36"/>
    <property type="match status" value="1"/>
</dbReference>
<dbReference type="PROSITE" id="PS00828">
    <property type="entry name" value="RIBOSOMAL_L36"/>
    <property type="match status" value="1"/>
</dbReference>
<accession>A5CXI5</accession>
<sequence>MKVRASVKRICNNCKIIKRHGVVRVICKEPRHKQRQG</sequence>